<name>NU4LM_MACMR</name>
<geneLocation type="mitochondrion"/>
<evidence type="ECO:0000250" key="1">
    <source>
        <dbReference type="UniProtKB" id="P03901"/>
    </source>
</evidence>
<evidence type="ECO:0000250" key="2">
    <source>
        <dbReference type="UniProtKB" id="P03902"/>
    </source>
</evidence>
<evidence type="ECO:0000255" key="3"/>
<evidence type="ECO:0000305" key="4"/>
<sequence>MTPTYMNIMLAFTISLLGMLIYRSHLMASLLCLEGMMMSLFIMTTLIALNTRSPLINIMPIILLVFAACEAAVGLALLVSISNTYGLDYIHNLNLLQC</sequence>
<gene>
    <name type="primary">MT-ND4L</name>
    <name type="synonym">MTND4L</name>
    <name type="synonym">NADH4L</name>
    <name type="synonym">ND4L</name>
</gene>
<comment type="function">
    <text evidence="1">Core subunit of the mitochondrial membrane respiratory chain NADH dehydrogenase (Complex I) which catalyzes electron transfer from NADH through the respiratory chain, using ubiquinone as an electron acceptor. Part of the enzyme membrane arm which is embedded in the lipid bilayer and involved in proton translocation.</text>
</comment>
<comment type="catalytic activity">
    <reaction evidence="1">
        <text>a ubiquinone + NADH + 5 H(+)(in) = a ubiquinol + NAD(+) + 4 H(+)(out)</text>
        <dbReference type="Rhea" id="RHEA:29091"/>
        <dbReference type="Rhea" id="RHEA-COMP:9565"/>
        <dbReference type="Rhea" id="RHEA-COMP:9566"/>
        <dbReference type="ChEBI" id="CHEBI:15378"/>
        <dbReference type="ChEBI" id="CHEBI:16389"/>
        <dbReference type="ChEBI" id="CHEBI:17976"/>
        <dbReference type="ChEBI" id="CHEBI:57540"/>
        <dbReference type="ChEBI" id="CHEBI:57945"/>
        <dbReference type="EC" id="7.1.1.2"/>
    </reaction>
    <physiologicalReaction direction="left-to-right" evidence="1">
        <dbReference type="Rhea" id="RHEA:29092"/>
    </physiologicalReaction>
</comment>
<comment type="subunit">
    <text evidence="2">Core subunit of respiratory chain NADH dehydrogenase (Complex I) which is composed of 45 different subunits.</text>
</comment>
<comment type="subcellular location">
    <subcellularLocation>
        <location evidence="2">Mitochondrion inner membrane</location>
        <topology evidence="3">Multi-pass membrane protein</topology>
    </subcellularLocation>
</comment>
<comment type="similarity">
    <text evidence="4">Belongs to the complex I subunit 4L family.</text>
</comment>
<organism>
    <name type="scientific">Macaca maura</name>
    <name type="common">Moor macaque</name>
    <dbReference type="NCBI Taxonomy" id="90383"/>
    <lineage>
        <taxon>Eukaryota</taxon>
        <taxon>Metazoa</taxon>
        <taxon>Chordata</taxon>
        <taxon>Craniata</taxon>
        <taxon>Vertebrata</taxon>
        <taxon>Euteleostomi</taxon>
        <taxon>Mammalia</taxon>
        <taxon>Eutheria</taxon>
        <taxon>Euarchontoglires</taxon>
        <taxon>Primates</taxon>
        <taxon>Haplorrhini</taxon>
        <taxon>Catarrhini</taxon>
        <taxon>Cercopithecidae</taxon>
        <taxon>Cercopithecinae</taxon>
        <taxon>Macaca</taxon>
    </lineage>
</organism>
<protein>
    <recommendedName>
        <fullName>NADH-ubiquinone oxidoreductase chain 4L</fullName>
        <ecNumber>7.1.1.2</ecNumber>
    </recommendedName>
    <alternativeName>
        <fullName>NADH dehydrogenase subunit 4L</fullName>
    </alternativeName>
</protein>
<dbReference type="EC" id="7.1.1.2"/>
<dbReference type="EMBL" id="AF091421">
    <property type="protein sequence ID" value="AAD24730.1"/>
    <property type="molecule type" value="Genomic_DNA"/>
</dbReference>
<dbReference type="EMBL" id="AF091422">
    <property type="protein sequence ID" value="AAD24732.1"/>
    <property type="molecule type" value="Genomic_DNA"/>
</dbReference>
<dbReference type="SMR" id="Q9XJY3"/>
<dbReference type="GO" id="GO:0005743">
    <property type="term" value="C:mitochondrial inner membrane"/>
    <property type="evidence" value="ECO:0000250"/>
    <property type="project" value="UniProtKB"/>
</dbReference>
<dbReference type="GO" id="GO:0045271">
    <property type="term" value="C:respiratory chain complex I"/>
    <property type="evidence" value="ECO:0000250"/>
    <property type="project" value="UniProtKB"/>
</dbReference>
<dbReference type="GO" id="GO:0008137">
    <property type="term" value="F:NADH dehydrogenase (ubiquinone) activity"/>
    <property type="evidence" value="ECO:0000250"/>
    <property type="project" value="UniProtKB"/>
</dbReference>
<dbReference type="GO" id="GO:0042773">
    <property type="term" value="P:ATP synthesis coupled electron transport"/>
    <property type="evidence" value="ECO:0007669"/>
    <property type="project" value="InterPro"/>
</dbReference>
<dbReference type="FunFam" id="1.10.287.3510:FF:000002">
    <property type="entry name" value="NADH-ubiquinone oxidoreductase chain 4L"/>
    <property type="match status" value="1"/>
</dbReference>
<dbReference type="Gene3D" id="1.10.287.3510">
    <property type="match status" value="1"/>
</dbReference>
<dbReference type="InterPro" id="IPR001133">
    <property type="entry name" value="NADH_UbQ_OxRdtase_chain4L/K"/>
</dbReference>
<dbReference type="InterPro" id="IPR039428">
    <property type="entry name" value="NUOK/Mnh_C1-like"/>
</dbReference>
<dbReference type="PANTHER" id="PTHR11434:SF0">
    <property type="entry name" value="NADH-UBIQUINONE OXIDOREDUCTASE CHAIN 4L"/>
    <property type="match status" value="1"/>
</dbReference>
<dbReference type="PANTHER" id="PTHR11434">
    <property type="entry name" value="NADH-UBIQUINONE OXIDOREDUCTASE SUBUNIT ND4L"/>
    <property type="match status" value="1"/>
</dbReference>
<dbReference type="Pfam" id="PF00420">
    <property type="entry name" value="Oxidored_q2"/>
    <property type="match status" value="1"/>
</dbReference>
<keyword id="KW-0249">Electron transport</keyword>
<keyword id="KW-0472">Membrane</keyword>
<keyword id="KW-0496">Mitochondrion</keyword>
<keyword id="KW-0999">Mitochondrion inner membrane</keyword>
<keyword id="KW-0520">NAD</keyword>
<keyword id="KW-0679">Respiratory chain</keyword>
<keyword id="KW-1278">Translocase</keyword>
<keyword id="KW-0812">Transmembrane</keyword>
<keyword id="KW-1133">Transmembrane helix</keyword>
<keyword id="KW-0813">Transport</keyword>
<keyword id="KW-0830">Ubiquinone</keyword>
<accession>Q9XJY3</accession>
<feature type="chain" id="PRO_0000246150" description="NADH-ubiquinone oxidoreductase chain 4L">
    <location>
        <begin position="1"/>
        <end position="98"/>
    </location>
</feature>
<feature type="transmembrane region" description="Helical" evidence="3">
    <location>
        <begin position="1"/>
        <end position="21"/>
    </location>
</feature>
<feature type="transmembrane region" description="Helical" evidence="3">
    <location>
        <begin position="29"/>
        <end position="49"/>
    </location>
</feature>
<feature type="transmembrane region" description="Helical" evidence="3">
    <location>
        <begin position="61"/>
        <end position="81"/>
    </location>
</feature>
<proteinExistence type="inferred from homology"/>
<reference key="1">
    <citation type="journal article" date="1999" name="Biol. J. Linn. Soc. Lond.">
        <title>Origin of the Sulawesi macaques (Cercopithecidae: Macaca) as suggested by mitochondrial DNA phylogeny.</title>
        <authorList>
            <person name="Evans B.J."/>
            <person name="Morales J.C."/>
            <person name="Supriatna J."/>
            <person name="Melnick D.J."/>
        </authorList>
    </citation>
    <scope>NUCLEOTIDE SEQUENCE [GENOMIC DNA]</scope>
</reference>